<gene>
    <name type="ordered locus">At1g68400</name>
    <name type="ORF">T2E12.5</name>
</gene>
<name>Y1680_ARATH</name>
<comment type="catalytic activity">
    <reaction>
        <text>L-seryl-[protein] + ATP = O-phospho-L-seryl-[protein] + ADP + H(+)</text>
        <dbReference type="Rhea" id="RHEA:17989"/>
        <dbReference type="Rhea" id="RHEA-COMP:9863"/>
        <dbReference type="Rhea" id="RHEA-COMP:11604"/>
        <dbReference type="ChEBI" id="CHEBI:15378"/>
        <dbReference type="ChEBI" id="CHEBI:29999"/>
        <dbReference type="ChEBI" id="CHEBI:30616"/>
        <dbReference type="ChEBI" id="CHEBI:83421"/>
        <dbReference type="ChEBI" id="CHEBI:456216"/>
        <dbReference type="EC" id="2.7.11.1"/>
    </reaction>
</comment>
<comment type="catalytic activity">
    <reaction>
        <text>L-threonyl-[protein] + ATP = O-phospho-L-threonyl-[protein] + ADP + H(+)</text>
        <dbReference type="Rhea" id="RHEA:46608"/>
        <dbReference type="Rhea" id="RHEA-COMP:11060"/>
        <dbReference type="Rhea" id="RHEA-COMP:11605"/>
        <dbReference type="ChEBI" id="CHEBI:15378"/>
        <dbReference type="ChEBI" id="CHEBI:30013"/>
        <dbReference type="ChEBI" id="CHEBI:30616"/>
        <dbReference type="ChEBI" id="CHEBI:61977"/>
        <dbReference type="ChEBI" id="CHEBI:456216"/>
        <dbReference type="EC" id="2.7.11.1"/>
    </reaction>
</comment>
<comment type="interaction">
    <interactant intactId="EBI-1238661">
        <id>Q9M9C5</id>
    </interactant>
    <interactant intactId="EBI-20651159">
        <id>C0LGD7-2</id>
        <label>At1g06840</label>
    </interactant>
    <organismsDiffer>false</organismsDiffer>
    <experiments>2</experiments>
</comment>
<comment type="interaction">
    <interactant intactId="EBI-1238661">
        <id>Q9M9C5</id>
    </interactant>
    <interactant intactId="EBI-20655952">
        <id>C0LGG6-2</id>
        <label>At1g51890</label>
    </interactant>
    <organismsDiffer>false</organismsDiffer>
    <experiments>2</experiments>
</comment>
<comment type="interaction">
    <interactant intactId="EBI-1238661">
        <id>Q9M9C5</id>
    </interactant>
    <interactant intactId="EBI-20657508">
        <id>A0A178WK49</id>
        <label>At1g62950</label>
    </interactant>
    <organismsDiffer>false</organismsDiffer>
    <experiments>3</experiments>
</comment>
<comment type="interaction">
    <interactant intactId="EBI-1238661">
        <id>Q9M9C5</id>
    </interactant>
    <interactant intactId="EBI-16956175">
        <id>Q9LRT1</id>
        <label>At3g28040</label>
    </interactant>
    <organismsDiffer>false</organismsDiffer>
    <experiments>3</experiments>
</comment>
<comment type="interaction">
    <interactant intactId="EBI-1238661">
        <id>Q9M9C5</id>
    </interactant>
    <interactant intactId="EBI-20654480">
        <id>C0LGR6</id>
        <label>At4g29180</label>
    </interactant>
    <organismsDiffer>false</organismsDiffer>
    <experiments>2</experiments>
</comment>
<comment type="interaction">
    <interactant intactId="EBI-1238661">
        <id>Q9M9C5</id>
    </interactant>
    <interactant intactId="EBI-20655031">
        <id>Q9SN97</id>
        <label>F18L15.140</label>
    </interactant>
    <organismsDiffer>false</organismsDiffer>
    <experiments>3</experiments>
</comment>
<comment type="interaction">
    <interactant intactId="EBI-1238661">
        <id>Q9M9C5</id>
    </interactant>
    <interactant intactId="EBI-20658889">
        <id>Q9SNA2</id>
        <label>F18L15.70</label>
    </interactant>
    <organismsDiffer>false</organismsDiffer>
    <experiments>3</experiments>
</comment>
<comment type="interaction">
    <interactant intactId="EBI-1238661">
        <id>Q9M9C5</id>
    </interactant>
    <interactant intactId="EBI-16955231">
        <id>Q9M0D8</id>
        <label>LRR-RLK</label>
    </interactant>
    <organismsDiffer>false</organismsDiffer>
    <experiments>4</experiments>
</comment>
<comment type="interaction">
    <interactant intactId="EBI-1238661">
        <id>Q9M9C5</id>
    </interactant>
    <interactant intactId="EBI-17121474">
        <id>Q93ZS4</id>
        <label>NIK3</label>
    </interactant>
    <organismsDiffer>false</organismsDiffer>
    <experiments>3</experiments>
</comment>
<comment type="interaction">
    <interactant intactId="EBI-1238661">
        <id>Q9M9C5</id>
    </interactant>
    <interactant intactId="EBI-20652612">
        <id>Q9FZ59</id>
        <label>PEPR2</label>
    </interactant>
    <organismsDiffer>false</organismsDiffer>
    <experiments>3</experiments>
</comment>
<comment type="interaction">
    <interactant intactId="EBI-1238661">
        <id>Q9M9C5</id>
    </interactant>
    <interactant intactId="EBI-16172949">
        <id>Q9ZVR7</id>
        <label>PSKR1</label>
    </interactant>
    <organismsDiffer>false</organismsDiffer>
    <experiments>3</experiments>
</comment>
<comment type="interaction">
    <interactant intactId="EBI-1238661">
        <id>Q9M9C5</id>
    </interactant>
    <interactant intactId="EBI-16902047">
        <id>Q9FN37</id>
        <label>PSKR2</label>
    </interactant>
    <organismsDiffer>false</organismsDiffer>
    <experiments>3</experiments>
</comment>
<comment type="interaction">
    <interactant intactId="EBI-1238661">
        <id>Q9M9C5</id>
    </interactant>
    <interactant intactId="EBI-1238200">
        <id>Q9LZV7</id>
        <label>PXC2</label>
    </interactant>
    <organismsDiffer>false</organismsDiffer>
    <experiments>3</experiments>
</comment>
<comment type="interaction">
    <interactant intactId="EBI-1238661">
        <id>Q9M9C5</id>
    </interactant>
    <interactant intactId="EBI-16905883">
        <id>Q9SKB2</id>
        <label>SOBIR1</label>
    </interactant>
    <organismsDiffer>false</organismsDiffer>
    <experiments>3</experiments>
</comment>
<comment type="interaction">
    <interactant intactId="EBI-1238661">
        <id>Q9M9C5</id>
    </interactant>
    <interactant intactId="EBI-16896864">
        <id>Q9SIT1</id>
        <label>TMK3</label>
    </interactant>
    <organismsDiffer>false</organismsDiffer>
    <experiments>4</experiments>
</comment>
<comment type="interaction">
    <interactant intactId="EBI-1238661">
        <id>Q9M9C5</id>
    </interactant>
    <interactant intactId="EBI-20658163">
        <id>Q8GY50</id>
        <label>VRLK1</label>
    </interactant>
    <organismsDiffer>false</organismsDiffer>
    <experiments>3</experiments>
</comment>
<comment type="subcellular location">
    <subcellularLocation>
        <location evidence="1">Cell membrane</location>
        <topology evidence="1">Single-pass type I membrane protein</topology>
    </subcellularLocation>
</comment>
<comment type="similarity">
    <text evidence="5">Belongs to the protein kinase superfamily. Ser/Thr protein kinase family.</text>
</comment>
<organism>
    <name type="scientific">Arabidopsis thaliana</name>
    <name type="common">Mouse-ear cress</name>
    <dbReference type="NCBI Taxonomy" id="3702"/>
    <lineage>
        <taxon>Eukaryota</taxon>
        <taxon>Viridiplantae</taxon>
        <taxon>Streptophyta</taxon>
        <taxon>Embryophyta</taxon>
        <taxon>Tracheophyta</taxon>
        <taxon>Spermatophyta</taxon>
        <taxon>Magnoliopsida</taxon>
        <taxon>eudicotyledons</taxon>
        <taxon>Gunneridae</taxon>
        <taxon>Pentapetalae</taxon>
        <taxon>rosids</taxon>
        <taxon>malvids</taxon>
        <taxon>Brassicales</taxon>
        <taxon>Brassicaceae</taxon>
        <taxon>Camelineae</taxon>
        <taxon>Arabidopsis</taxon>
    </lineage>
</organism>
<accession>Q9M9C5</accession>
<accession>Q94JL9</accession>
<reference key="1">
    <citation type="journal article" date="2000" name="Nature">
        <title>Sequence and analysis of chromosome 1 of the plant Arabidopsis thaliana.</title>
        <authorList>
            <person name="Theologis A."/>
            <person name="Ecker J.R."/>
            <person name="Palm C.J."/>
            <person name="Federspiel N.A."/>
            <person name="Kaul S."/>
            <person name="White O."/>
            <person name="Alonso J."/>
            <person name="Altafi H."/>
            <person name="Araujo R."/>
            <person name="Bowman C.L."/>
            <person name="Brooks S.Y."/>
            <person name="Buehler E."/>
            <person name="Chan A."/>
            <person name="Chao Q."/>
            <person name="Chen H."/>
            <person name="Cheuk R.F."/>
            <person name="Chin C.W."/>
            <person name="Chung M.K."/>
            <person name="Conn L."/>
            <person name="Conway A.B."/>
            <person name="Conway A.R."/>
            <person name="Creasy T.H."/>
            <person name="Dewar K."/>
            <person name="Dunn P."/>
            <person name="Etgu P."/>
            <person name="Feldblyum T.V."/>
            <person name="Feng J.-D."/>
            <person name="Fong B."/>
            <person name="Fujii C.Y."/>
            <person name="Gill J.E."/>
            <person name="Goldsmith A.D."/>
            <person name="Haas B."/>
            <person name="Hansen N.F."/>
            <person name="Hughes B."/>
            <person name="Huizar L."/>
            <person name="Hunter J.L."/>
            <person name="Jenkins J."/>
            <person name="Johnson-Hopson C."/>
            <person name="Khan S."/>
            <person name="Khaykin E."/>
            <person name="Kim C.J."/>
            <person name="Koo H.L."/>
            <person name="Kremenetskaia I."/>
            <person name="Kurtz D.B."/>
            <person name="Kwan A."/>
            <person name="Lam B."/>
            <person name="Langin-Hooper S."/>
            <person name="Lee A."/>
            <person name="Lee J.M."/>
            <person name="Lenz C.A."/>
            <person name="Li J.H."/>
            <person name="Li Y.-P."/>
            <person name="Lin X."/>
            <person name="Liu S.X."/>
            <person name="Liu Z.A."/>
            <person name="Luros J.S."/>
            <person name="Maiti R."/>
            <person name="Marziali A."/>
            <person name="Militscher J."/>
            <person name="Miranda M."/>
            <person name="Nguyen M."/>
            <person name="Nierman W.C."/>
            <person name="Osborne B.I."/>
            <person name="Pai G."/>
            <person name="Peterson J."/>
            <person name="Pham P.K."/>
            <person name="Rizzo M."/>
            <person name="Rooney T."/>
            <person name="Rowley D."/>
            <person name="Sakano H."/>
            <person name="Salzberg S.L."/>
            <person name="Schwartz J.R."/>
            <person name="Shinn P."/>
            <person name="Southwick A.M."/>
            <person name="Sun H."/>
            <person name="Tallon L.J."/>
            <person name="Tambunga G."/>
            <person name="Toriumi M.J."/>
            <person name="Town C.D."/>
            <person name="Utterback T."/>
            <person name="Van Aken S."/>
            <person name="Vaysberg M."/>
            <person name="Vysotskaia V.S."/>
            <person name="Walker M."/>
            <person name="Wu D."/>
            <person name="Yu G."/>
            <person name="Fraser C.M."/>
            <person name="Venter J.C."/>
            <person name="Davis R.W."/>
        </authorList>
    </citation>
    <scope>NUCLEOTIDE SEQUENCE [LARGE SCALE GENOMIC DNA]</scope>
    <source>
        <strain>cv. Columbia</strain>
    </source>
</reference>
<reference key="2">
    <citation type="journal article" date="2017" name="Plant J.">
        <title>Araport11: a complete reannotation of the Arabidopsis thaliana reference genome.</title>
        <authorList>
            <person name="Cheng C.Y."/>
            <person name="Krishnakumar V."/>
            <person name="Chan A.P."/>
            <person name="Thibaud-Nissen F."/>
            <person name="Schobel S."/>
            <person name="Town C.D."/>
        </authorList>
    </citation>
    <scope>GENOME REANNOTATION</scope>
    <source>
        <strain>cv. Columbia</strain>
    </source>
</reference>
<reference key="3">
    <citation type="journal article" date="2003" name="Science">
        <title>Empirical analysis of transcriptional activity in the Arabidopsis genome.</title>
        <authorList>
            <person name="Yamada K."/>
            <person name="Lim J."/>
            <person name="Dale J.M."/>
            <person name="Chen H."/>
            <person name="Shinn P."/>
            <person name="Palm C.J."/>
            <person name="Southwick A.M."/>
            <person name="Wu H.C."/>
            <person name="Kim C.J."/>
            <person name="Nguyen M."/>
            <person name="Pham P.K."/>
            <person name="Cheuk R.F."/>
            <person name="Karlin-Newmann G."/>
            <person name="Liu S.X."/>
            <person name="Lam B."/>
            <person name="Sakano H."/>
            <person name="Wu T."/>
            <person name="Yu G."/>
            <person name="Miranda M."/>
            <person name="Quach H.L."/>
            <person name="Tripp M."/>
            <person name="Chang C.H."/>
            <person name="Lee J.M."/>
            <person name="Toriumi M.J."/>
            <person name="Chan M.M."/>
            <person name="Tang C.C."/>
            <person name="Onodera C.S."/>
            <person name="Deng J.M."/>
            <person name="Akiyama K."/>
            <person name="Ansari Y."/>
            <person name="Arakawa T."/>
            <person name="Banh J."/>
            <person name="Banno F."/>
            <person name="Bowser L."/>
            <person name="Brooks S.Y."/>
            <person name="Carninci P."/>
            <person name="Chao Q."/>
            <person name="Choy N."/>
            <person name="Enju A."/>
            <person name="Goldsmith A.D."/>
            <person name="Gurjal M."/>
            <person name="Hansen N.F."/>
            <person name="Hayashizaki Y."/>
            <person name="Johnson-Hopson C."/>
            <person name="Hsuan V.W."/>
            <person name="Iida K."/>
            <person name="Karnes M."/>
            <person name="Khan S."/>
            <person name="Koesema E."/>
            <person name="Ishida J."/>
            <person name="Jiang P.X."/>
            <person name="Jones T."/>
            <person name="Kawai J."/>
            <person name="Kamiya A."/>
            <person name="Meyers C."/>
            <person name="Nakajima M."/>
            <person name="Narusaka M."/>
            <person name="Seki M."/>
            <person name="Sakurai T."/>
            <person name="Satou M."/>
            <person name="Tamse R."/>
            <person name="Vaysberg M."/>
            <person name="Wallender E.K."/>
            <person name="Wong C."/>
            <person name="Yamamura Y."/>
            <person name="Yuan S."/>
            <person name="Shinozaki K."/>
            <person name="Davis R.W."/>
            <person name="Theologis A."/>
            <person name="Ecker J.R."/>
        </authorList>
    </citation>
    <scope>NUCLEOTIDE SEQUENCE [LARGE SCALE MRNA]</scope>
    <source>
        <strain>cv. Columbia</strain>
    </source>
</reference>
<reference key="4">
    <citation type="journal article" date="2010" name="BMC Genomics">
        <title>Genome-wide cloning and sequence analysis of leucine-rich repeat receptor-like protein kinase genes in Arabidopsis thaliana.</title>
        <authorList>
            <person name="Gou X."/>
            <person name="He K."/>
            <person name="Yang H."/>
            <person name="Yuan T."/>
            <person name="Lin H."/>
            <person name="Clouse S.D."/>
            <person name="Li J."/>
        </authorList>
    </citation>
    <scope>NUCLEOTIDE SEQUENCE [LARGE SCALE MRNA]</scope>
    <source>
        <strain>cv. Columbia</strain>
    </source>
</reference>
<feature type="signal peptide" evidence="4">
    <location>
        <begin position="1"/>
        <end position="29"/>
    </location>
</feature>
<feature type="chain" id="PRO_0000401342" description="Probable leucine-rich repeat receptor-like protein kinase At1g68400">
    <location>
        <begin position="30"/>
        <end position="670"/>
    </location>
</feature>
<feature type="topological domain" description="Extracellular" evidence="4">
    <location>
        <begin position="30"/>
        <end position="274"/>
    </location>
</feature>
<feature type="transmembrane region" description="Helical" evidence="4">
    <location>
        <begin position="275"/>
        <end position="295"/>
    </location>
</feature>
<feature type="topological domain" description="Cytoplasmic" evidence="4">
    <location>
        <begin position="296"/>
        <end position="670"/>
    </location>
</feature>
<feature type="repeat" description="LRR 1">
    <location>
        <begin position="69"/>
        <end position="91"/>
    </location>
</feature>
<feature type="repeat" description="LRR 2">
    <location>
        <begin position="92"/>
        <end position="114"/>
    </location>
</feature>
<feature type="repeat" description="LRR 3">
    <location>
        <begin position="115"/>
        <end position="137"/>
    </location>
</feature>
<feature type="repeat" description="LRR 4">
    <location>
        <begin position="139"/>
        <end position="162"/>
    </location>
</feature>
<feature type="repeat" description="LRR 5">
    <location>
        <begin position="163"/>
        <end position="185"/>
    </location>
</feature>
<feature type="repeat" description="LRR 6">
    <location>
        <begin position="186"/>
        <end position="207"/>
    </location>
</feature>
<feature type="domain" description="Protein kinase" evidence="5">
    <location>
        <begin position="362"/>
        <end position="636"/>
    </location>
</feature>
<feature type="region of interest" description="Disordered" evidence="7">
    <location>
        <begin position="230"/>
        <end position="266"/>
    </location>
</feature>
<feature type="compositionally biased region" description="Polar residues" evidence="7">
    <location>
        <begin position="253"/>
        <end position="266"/>
    </location>
</feature>
<feature type="active site" description="Proton acceptor" evidence="5 6">
    <location>
        <position position="491"/>
    </location>
</feature>
<feature type="binding site" evidence="5">
    <location>
        <begin position="368"/>
        <end position="376"/>
    </location>
    <ligand>
        <name>ATP</name>
        <dbReference type="ChEBI" id="CHEBI:30616"/>
    </ligand>
</feature>
<feature type="binding site" evidence="5">
    <location>
        <position position="390"/>
    </location>
    <ligand>
        <name>ATP</name>
        <dbReference type="ChEBI" id="CHEBI:30616"/>
    </ligand>
</feature>
<feature type="modified residue" description="Phosphoserine" evidence="3">
    <location>
        <position position="364"/>
    </location>
</feature>
<feature type="modified residue" description="Phosphoserine" evidence="2">
    <location>
        <position position="443"/>
    </location>
</feature>
<feature type="modified residue" description="Phosphothreonine" evidence="2">
    <location>
        <position position="463"/>
    </location>
</feature>
<feature type="modified residue" description="Phosphothreonine" evidence="2">
    <location>
        <position position="616"/>
    </location>
</feature>
<feature type="glycosylation site" description="N-linked (GlcNAc...) asparagine" evidence="4">
    <location>
        <position position="52"/>
    </location>
</feature>
<feature type="glycosylation site" description="N-linked (GlcNAc...) asparagine" evidence="4">
    <location>
        <position position="79"/>
    </location>
</feature>
<feature type="glycosylation site" description="N-linked (GlcNAc...) asparagine" evidence="4">
    <location>
        <position position="102"/>
    </location>
</feature>
<feature type="glycosylation site" description="N-linked (GlcNAc...) asparagine" evidence="4">
    <location>
        <position position="109"/>
    </location>
</feature>
<feature type="glycosylation site" description="N-linked (GlcNAc...) asparagine" evidence="4">
    <location>
        <position position="112"/>
    </location>
</feature>
<feature type="glycosylation site" description="N-linked (GlcNAc...) asparagine" evidence="4">
    <location>
        <position position="149"/>
    </location>
</feature>
<feature type="glycosylation site" description="N-linked (GlcNAc...) asparagine" evidence="4">
    <location>
        <position position="182"/>
    </location>
</feature>
<feature type="glycosylation site" description="N-linked (GlcNAc...) asparagine" evidence="4">
    <location>
        <position position="190"/>
    </location>
</feature>
<feature type="glycosylation site" description="N-linked (GlcNAc...) asparagine" evidence="4">
    <location>
        <position position="268"/>
    </location>
</feature>
<feature type="sequence conflict" description="In Ref. 3; AAK55693/AAM26714." evidence="8" ref="3">
    <original>G</original>
    <variation>GK</variation>
    <location>
        <position position="400"/>
    </location>
</feature>
<proteinExistence type="evidence at protein level"/>
<dbReference type="EC" id="2.7.11.1"/>
<dbReference type="EMBL" id="AC015986">
    <property type="protein sequence ID" value="AAF26042.1"/>
    <property type="molecule type" value="Genomic_DNA"/>
</dbReference>
<dbReference type="EMBL" id="CP002684">
    <property type="protein sequence ID" value="AEE34789.1"/>
    <property type="molecule type" value="Genomic_DNA"/>
</dbReference>
<dbReference type="EMBL" id="AF378890">
    <property type="protein sequence ID" value="AAK55693.1"/>
    <property type="molecule type" value="mRNA"/>
</dbReference>
<dbReference type="EMBL" id="AY102147">
    <property type="protein sequence ID" value="AAM26714.1"/>
    <property type="molecule type" value="mRNA"/>
</dbReference>
<dbReference type="EMBL" id="FJ708673">
    <property type="protein sequence ID" value="ACN59268.1"/>
    <property type="molecule type" value="mRNA"/>
</dbReference>
<dbReference type="PIR" id="H96707">
    <property type="entry name" value="H96707"/>
</dbReference>
<dbReference type="RefSeq" id="NP_177007.1">
    <property type="nucleotide sequence ID" value="NM_105511.3"/>
</dbReference>
<dbReference type="SMR" id="Q9M9C5"/>
<dbReference type="BioGRID" id="28390">
    <property type="interactions" value="60"/>
</dbReference>
<dbReference type="FunCoup" id="Q9M9C5">
    <property type="interactions" value="220"/>
</dbReference>
<dbReference type="IntAct" id="Q9M9C5">
    <property type="interactions" value="78"/>
</dbReference>
<dbReference type="STRING" id="3702.Q9M9C5"/>
<dbReference type="GlyGen" id="Q9M9C5">
    <property type="glycosylation" value="9 sites"/>
</dbReference>
<dbReference type="iPTMnet" id="Q9M9C5"/>
<dbReference type="PaxDb" id="3702-AT1G68400.1"/>
<dbReference type="ProteomicsDB" id="242395"/>
<dbReference type="EnsemblPlants" id="AT1G68400.1">
    <property type="protein sequence ID" value="AT1G68400.1"/>
    <property type="gene ID" value="AT1G68400"/>
</dbReference>
<dbReference type="GeneID" id="843169"/>
<dbReference type="Gramene" id="AT1G68400.1">
    <property type="protein sequence ID" value="AT1G68400.1"/>
    <property type="gene ID" value="AT1G68400"/>
</dbReference>
<dbReference type="KEGG" id="ath:AT1G68400"/>
<dbReference type="Araport" id="AT1G68400"/>
<dbReference type="TAIR" id="AT1G68400"/>
<dbReference type="eggNOG" id="ENOG502QPUR">
    <property type="taxonomic scope" value="Eukaryota"/>
</dbReference>
<dbReference type="HOGENOM" id="CLU_000288_92_6_1"/>
<dbReference type="InParanoid" id="Q9M9C5"/>
<dbReference type="OMA" id="PNATLFW"/>
<dbReference type="PhylomeDB" id="Q9M9C5"/>
<dbReference type="PRO" id="PR:Q9M9C5"/>
<dbReference type="Proteomes" id="UP000006548">
    <property type="component" value="Chromosome 1"/>
</dbReference>
<dbReference type="ExpressionAtlas" id="Q9M9C5">
    <property type="expression patterns" value="baseline and differential"/>
</dbReference>
<dbReference type="GO" id="GO:0005886">
    <property type="term" value="C:plasma membrane"/>
    <property type="evidence" value="ECO:0007669"/>
    <property type="project" value="UniProtKB-SubCell"/>
</dbReference>
<dbReference type="GO" id="GO:0005524">
    <property type="term" value="F:ATP binding"/>
    <property type="evidence" value="ECO:0007669"/>
    <property type="project" value="UniProtKB-KW"/>
</dbReference>
<dbReference type="GO" id="GO:0106310">
    <property type="term" value="F:protein serine kinase activity"/>
    <property type="evidence" value="ECO:0007669"/>
    <property type="project" value="RHEA"/>
</dbReference>
<dbReference type="GO" id="GO:0004674">
    <property type="term" value="F:protein serine/threonine kinase activity"/>
    <property type="evidence" value="ECO:0007669"/>
    <property type="project" value="UniProtKB-KW"/>
</dbReference>
<dbReference type="CDD" id="cd14066">
    <property type="entry name" value="STKc_IRAK"/>
    <property type="match status" value="1"/>
</dbReference>
<dbReference type="FunFam" id="3.80.10.10:FF:000275">
    <property type="entry name" value="Leucine-rich repeat receptor-like protein kinase"/>
    <property type="match status" value="1"/>
</dbReference>
<dbReference type="FunFam" id="3.30.200.20:FF:000307">
    <property type="entry name" value="pollen receptor-like kinase 1"/>
    <property type="match status" value="1"/>
</dbReference>
<dbReference type="FunFam" id="1.10.510.10:FF:000095">
    <property type="entry name" value="protein STRUBBELIG-RECEPTOR FAMILY 8"/>
    <property type="match status" value="1"/>
</dbReference>
<dbReference type="Gene3D" id="3.30.200.20">
    <property type="entry name" value="Phosphorylase Kinase, domain 1"/>
    <property type="match status" value="1"/>
</dbReference>
<dbReference type="Gene3D" id="3.80.10.10">
    <property type="entry name" value="Ribonuclease Inhibitor"/>
    <property type="match status" value="2"/>
</dbReference>
<dbReference type="Gene3D" id="1.10.510.10">
    <property type="entry name" value="Transferase(Phosphotransferase) domain 1"/>
    <property type="match status" value="1"/>
</dbReference>
<dbReference type="InterPro" id="IPR011009">
    <property type="entry name" value="Kinase-like_dom_sf"/>
</dbReference>
<dbReference type="InterPro" id="IPR001611">
    <property type="entry name" value="Leu-rich_rpt"/>
</dbReference>
<dbReference type="InterPro" id="IPR032675">
    <property type="entry name" value="LRR_dom_sf"/>
</dbReference>
<dbReference type="InterPro" id="IPR013210">
    <property type="entry name" value="LRR_N_plant-typ"/>
</dbReference>
<dbReference type="InterPro" id="IPR046959">
    <property type="entry name" value="PRK1-6/SRF4-like"/>
</dbReference>
<dbReference type="InterPro" id="IPR000719">
    <property type="entry name" value="Prot_kinase_dom"/>
</dbReference>
<dbReference type="InterPro" id="IPR017441">
    <property type="entry name" value="Protein_kinase_ATP_BS"/>
</dbReference>
<dbReference type="InterPro" id="IPR008271">
    <property type="entry name" value="Ser/Thr_kinase_AS"/>
</dbReference>
<dbReference type="PANTHER" id="PTHR48007">
    <property type="entry name" value="LEUCINE-RICH REPEAT RECEPTOR-LIKE PROTEIN KINASE PXC1"/>
    <property type="match status" value="1"/>
</dbReference>
<dbReference type="PANTHER" id="PTHR48007:SF9">
    <property type="entry name" value="PROTEIN KINASE DOMAIN-CONTAINING PROTEIN"/>
    <property type="match status" value="1"/>
</dbReference>
<dbReference type="Pfam" id="PF00560">
    <property type="entry name" value="LRR_1"/>
    <property type="match status" value="4"/>
</dbReference>
<dbReference type="Pfam" id="PF08263">
    <property type="entry name" value="LRRNT_2"/>
    <property type="match status" value="1"/>
</dbReference>
<dbReference type="Pfam" id="PF00069">
    <property type="entry name" value="Pkinase"/>
    <property type="match status" value="1"/>
</dbReference>
<dbReference type="SMART" id="SM00220">
    <property type="entry name" value="S_TKc"/>
    <property type="match status" value="1"/>
</dbReference>
<dbReference type="SUPFAM" id="SSF52058">
    <property type="entry name" value="L domain-like"/>
    <property type="match status" value="1"/>
</dbReference>
<dbReference type="SUPFAM" id="SSF56112">
    <property type="entry name" value="Protein kinase-like (PK-like)"/>
    <property type="match status" value="1"/>
</dbReference>
<dbReference type="PROSITE" id="PS51450">
    <property type="entry name" value="LRR"/>
    <property type="match status" value="4"/>
</dbReference>
<dbReference type="PROSITE" id="PS00107">
    <property type="entry name" value="PROTEIN_KINASE_ATP"/>
    <property type="match status" value="1"/>
</dbReference>
<dbReference type="PROSITE" id="PS50011">
    <property type="entry name" value="PROTEIN_KINASE_DOM"/>
    <property type="match status" value="1"/>
</dbReference>
<dbReference type="PROSITE" id="PS00108">
    <property type="entry name" value="PROTEIN_KINASE_ST"/>
    <property type="match status" value="1"/>
</dbReference>
<protein>
    <recommendedName>
        <fullName>Probable leucine-rich repeat receptor-like protein kinase At1g68400</fullName>
        <ecNumber>2.7.11.1</ecNumber>
    </recommendedName>
</protein>
<keyword id="KW-0067">ATP-binding</keyword>
<keyword id="KW-1003">Cell membrane</keyword>
<keyword id="KW-0325">Glycoprotein</keyword>
<keyword id="KW-0418">Kinase</keyword>
<keyword id="KW-0433">Leucine-rich repeat</keyword>
<keyword id="KW-0472">Membrane</keyword>
<keyword id="KW-0547">Nucleotide-binding</keyword>
<keyword id="KW-0597">Phosphoprotein</keyword>
<keyword id="KW-0675">Receptor</keyword>
<keyword id="KW-1185">Reference proteome</keyword>
<keyword id="KW-0677">Repeat</keyword>
<keyword id="KW-0723">Serine/threonine-protein kinase</keyword>
<keyword id="KW-0732">Signal</keyword>
<keyword id="KW-0808">Transferase</keyword>
<keyword id="KW-0812">Transmembrane</keyword>
<keyword id="KW-1133">Transmembrane helix</keyword>
<sequence>MAKSSFFNKHLLLSLLILLQSCLLSSSSSTDSETLLNFKLTADSTGKLNSWNTTTNPCQWTGVSCNRNRVTRLVLEDINLTGSISSLTSLTSLRVLSLKHNNLSGPIPNLSNLTALKLLFLSNNQFSGNFPTSITSLTRLYRLDLSFNNFSGQIPPDLTDLTHLLTLRLESNRFSGQIPNINLSDLQDFNVSGNNFNGQIPNSLSQFPESVFTQNPSLCGAPLLKCTKLSSDPTKPGRPDEAKASPLNKPETVPSSPTSIHGGDKSNNTSRISTISLIAIILGDFIILSFVSLLLYYCFWRQYAVNKKKHSKILEGEKIVYSSNPYPTSTQNNNNQNQQVGDKGKMVFFEGTRRFELEDLLRASAEMLGKGGFGTAYKAVLEDGNEVAVKRLKDAVTVAGKKEFEQQMEVLGRLRHTNLVSLKAYYFAREEKLLVYDYMPNGSLFWLLHGNRGPGRTPLDWTTRLKIAAGAARGLAFIHGSCKTLKLTHGDIKSTNVLLDRSGNARVSDFGLSIFAPSQTVAKSNGYRAPELIDGRKHTQKSDVYSFGVLLLEILTGKCPNMVETGHSGGAVDLPRWVQSVVREEWTAEVFDLELMRYKDIEEEMVGLLQIAMACTAVAADHRPKMGHVVKLIEDIRGGGSEASPCNDGINSAVDSPCLSEDTCGGTTSQ</sequence>
<evidence type="ECO:0000250" key="1"/>
<evidence type="ECO:0000250" key="2">
    <source>
        <dbReference type="UniProtKB" id="Q94AG2"/>
    </source>
</evidence>
<evidence type="ECO:0000250" key="3">
    <source>
        <dbReference type="UniProtKB" id="Q94F62"/>
    </source>
</evidence>
<evidence type="ECO:0000255" key="4"/>
<evidence type="ECO:0000255" key="5">
    <source>
        <dbReference type="PROSITE-ProRule" id="PRU00159"/>
    </source>
</evidence>
<evidence type="ECO:0000255" key="6">
    <source>
        <dbReference type="PROSITE-ProRule" id="PRU10027"/>
    </source>
</evidence>
<evidence type="ECO:0000256" key="7">
    <source>
        <dbReference type="SAM" id="MobiDB-lite"/>
    </source>
</evidence>
<evidence type="ECO:0000305" key="8"/>